<reference key="1">
    <citation type="journal article" date="2007" name="ISME J.">
        <title>Population level functional diversity in a microbial community revealed by comparative genomic and metagenomic analyses.</title>
        <authorList>
            <person name="Bhaya D."/>
            <person name="Grossman A.R."/>
            <person name="Steunou A.-S."/>
            <person name="Khuri N."/>
            <person name="Cohan F.M."/>
            <person name="Hamamura N."/>
            <person name="Melendrez M.C."/>
            <person name="Bateson M.M."/>
            <person name="Ward D.M."/>
            <person name="Heidelberg J.F."/>
        </authorList>
    </citation>
    <scope>NUCLEOTIDE SEQUENCE [LARGE SCALE GENOMIC DNA]</scope>
    <source>
        <strain>JA-3-3Ab</strain>
    </source>
</reference>
<accession>Q2JW64</accession>
<proteinExistence type="inferred from homology"/>
<gene>
    <name evidence="1" type="primary">clpX</name>
    <name type="ordered locus">CYA_0802</name>
</gene>
<dbReference type="EMBL" id="CP000239">
    <property type="protein sequence ID" value="ABC99008.1"/>
    <property type="molecule type" value="Genomic_DNA"/>
</dbReference>
<dbReference type="RefSeq" id="WP_011429692.1">
    <property type="nucleotide sequence ID" value="NC_007775.1"/>
</dbReference>
<dbReference type="SMR" id="Q2JW64"/>
<dbReference type="STRING" id="321327.CYA_0802"/>
<dbReference type="KEGG" id="cya:CYA_0802"/>
<dbReference type="eggNOG" id="COG1219">
    <property type="taxonomic scope" value="Bacteria"/>
</dbReference>
<dbReference type="HOGENOM" id="CLU_014218_8_2_3"/>
<dbReference type="OrthoDB" id="9804062at2"/>
<dbReference type="Proteomes" id="UP000008818">
    <property type="component" value="Chromosome"/>
</dbReference>
<dbReference type="GO" id="GO:0009376">
    <property type="term" value="C:HslUV protease complex"/>
    <property type="evidence" value="ECO:0007669"/>
    <property type="project" value="TreeGrafter"/>
</dbReference>
<dbReference type="GO" id="GO:0005524">
    <property type="term" value="F:ATP binding"/>
    <property type="evidence" value="ECO:0007669"/>
    <property type="project" value="UniProtKB-UniRule"/>
</dbReference>
<dbReference type="GO" id="GO:0016887">
    <property type="term" value="F:ATP hydrolysis activity"/>
    <property type="evidence" value="ECO:0007669"/>
    <property type="project" value="InterPro"/>
</dbReference>
<dbReference type="GO" id="GO:0140662">
    <property type="term" value="F:ATP-dependent protein folding chaperone"/>
    <property type="evidence" value="ECO:0007669"/>
    <property type="project" value="InterPro"/>
</dbReference>
<dbReference type="GO" id="GO:0046983">
    <property type="term" value="F:protein dimerization activity"/>
    <property type="evidence" value="ECO:0007669"/>
    <property type="project" value="InterPro"/>
</dbReference>
<dbReference type="GO" id="GO:0051082">
    <property type="term" value="F:unfolded protein binding"/>
    <property type="evidence" value="ECO:0007669"/>
    <property type="project" value="UniProtKB-UniRule"/>
</dbReference>
<dbReference type="GO" id="GO:0008270">
    <property type="term" value="F:zinc ion binding"/>
    <property type="evidence" value="ECO:0007669"/>
    <property type="project" value="InterPro"/>
</dbReference>
<dbReference type="GO" id="GO:0051301">
    <property type="term" value="P:cell division"/>
    <property type="evidence" value="ECO:0007669"/>
    <property type="project" value="TreeGrafter"/>
</dbReference>
<dbReference type="GO" id="GO:0051603">
    <property type="term" value="P:proteolysis involved in protein catabolic process"/>
    <property type="evidence" value="ECO:0007669"/>
    <property type="project" value="TreeGrafter"/>
</dbReference>
<dbReference type="CDD" id="cd19497">
    <property type="entry name" value="RecA-like_ClpX"/>
    <property type="match status" value="1"/>
</dbReference>
<dbReference type="FunFam" id="1.10.8.60:FF:000002">
    <property type="entry name" value="ATP-dependent Clp protease ATP-binding subunit ClpX"/>
    <property type="match status" value="1"/>
</dbReference>
<dbReference type="FunFam" id="3.40.50.300:FF:000005">
    <property type="entry name" value="ATP-dependent Clp protease ATP-binding subunit ClpX"/>
    <property type="match status" value="1"/>
</dbReference>
<dbReference type="Gene3D" id="1.10.8.60">
    <property type="match status" value="1"/>
</dbReference>
<dbReference type="Gene3D" id="6.20.220.10">
    <property type="entry name" value="ClpX chaperone, C4-type zinc finger domain"/>
    <property type="match status" value="1"/>
</dbReference>
<dbReference type="Gene3D" id="3.40.50.300">
    <property type="entry name" value="P-loop containing nucleotide triphosphate hydrolases"/>
    <property type="match status" value="1"/>
</dbReference>
<dbReference type="HAMAP" id="MF_00175">
    <property type="entry name" value="ClpX"/>
    <property type="match status" value="1"/>
</dbReference>
<dbReference type="InterPro" id="IPR003593">
    <property type="entry name" value="AAA+_ATPase"/>
</dbReference>
<dbReference type="InterPro" id="IPR050052">
    <property type="entry name" value="ATP-dep_Clp_protease_ClpX"/>
</dbReference>
<dbReference type="InterPro" id="IPR003959">
    <property type="entry name" value="ATPase_AAA_core"/>
</dbReference>
<dbReference type="InterPro" id="IPR019489">
    <property type="entry name" value="Clp_ATPase_C"/>
</dbReference>
<dbReference type="InterPro" id="IPR004487">
    <property type="entry name" value="Clp_protease_ATP-bd_su_ClpX"/>
</dbReference>
<dbReference type="InterPro" id="IPR046425">
    <property type="entry name" value="ClpX_bact"/>
</dbReference>
<dbReference type="InterPro" id="IPR027417">
    <property type="entry name" value="P-loop_NTPase"/>
</dbReference>
<dbReference type="InterPro" id="IPR010603">
    <property type="entry name" value="Znf_CppX_C4"/>
</dbReference>
<dbReference type="InterPro" id="IPR038366">
    <property type="entry name" value="Znf_CppX_C4_sf"/>
</dbReference>
<dbReference type="NCBIfam" id="TIGR00382">
    <property type="entry name" value="clpX"/>
    <property type="match status" value="1"/>
</dbReference>
<dbReference type="NCBIfam" id="NF003745">
    <property type="entry name" value="PRK05342.1"/>
    <property type="match status" value="1"/>
</dbReference>
<dbReference type="PANTHER" id="PTHR48102:SF7">
    <property type="entry name" value="ATP-DEPENDENT CLP PROTEASE ATP-BINDING SUBUNIT CLPX-LIKE, MITOCHONDRIAL"/>
    <property type="match status" value="1"/>
</dbReference>
<dbReference type="PANTHER" id="PTHR48102">
    <property type="entry name" value="ATP-DEPENDENT CLP PROTEASE ATP-BINDING SUBUNIT CLPX-LIKE, MITOCHONDRIAL-RELATED"/>
    <property type="match status" value="1"/>
</dbReference>
<dbReference type="Pfam" id="PF07724">
    <property type="entry name" value="AAA_2"/>
    <property type="match status" value="1"/>
</dbReference>
<dbReference type="Pfam" id="PF10431">
    <property type="entry name" value="ClpB_D2-small"/>
    <property type="match status" value="1"/>
</dbReference>
<dbReference type="Pfam" id="PF06689">
    <property type="entry name" value="zf-C4_ClpX"/>
    <property type="match status" value="1"/>
</dbReference>
<dbReference type="SMART" id="SM00382">
    <property type="entry name" value="AAA"/>
    <property type="match status" value="1"/>
</dbReference>
<dbReference type="SMART" id="SM01086">
    <property type="entry name" value="ClpB_D2-small"/>
    <property type="match status" value="1"/>
</dbReference>
<dbReference type="SMART" id="SM00994">
    <property type="entry name" value="zf-C4_ClpX"/>
    <property type="match status" value="1"/>
</dbReference>
<dbReference type="SUPFAM" id="SSF57716">
    <property type="entry name" value="Glucocorticoid receptor-like (DNA-binding domain)"/>
    <property type="match status" value="1"/>
</dbReference>
<dbReference type="SUPFAM" id="SSF52540">
    <property type="entry name" value="P-loop containing nucleoside triphosphate hydrolases"/>
    <property type="match status" value="1"/>
</dbReference>
<dbReference type="PROSITE" id="PS51902">
    <property type="entry name" value="CLPX_ZB"/>
    <property type="match status" value="1"/>
</dbReference>
<sequence>MAKHDSHLRCSFCNKSQDQVRKLIAGPGVYICDECVELCNEILEEELYDGNTPPATAPAASRRETPRKSSRSLPSLAQLPKPREIMRYLDQYVIGQEKAKKVLSVAVYNHYKRLAAKANPNSLGAAELDEVELQKSNILVIGPTGSGKTLLAETLARMLDVPFAVADATTLTEAGYVGEDVENILLRLLQVADMDVEEAQRGIIYIDEIDKIARKSENPSITRDVSGEGVQQALLKMLEGTIANVPPQGGRKHPYQDCIQIDTSNILFICGGAFVGLEKVIEQRIGKKSMGFIKPGEQLAVTREQRLADALKALEPEDLIKYGMIPEFIGRLPVVATLDPLDEKALEAILTQPKNAILKQAQKLLRMDGVELEFEPAAISAIAKEAYRRKTGARALRAIVEELMLDVMYEVPSRRDIKYVRITAEMVERRSTHELIPHPSTLPKPESA</sequence>
<feature type="chain" id="PRO_1000024688" description="ATP-dependent Clp protease ATP-binding subunit ClpX">
    <location>
        <begin position="1"/>
        <end position="448"/>
    </location>
</feature>
<feature type="domain" description="ClpX-type ZB" evidence="2">
    <location>
        <begin position="1"/>
        <end position="51"/>
    </location>
</feature>
<feature type="region of interest" description="Disordered" evidence="3">
    <location>
        <begin position="50"/>
        <end position="76"/>
    </location>
</feature>
<feature type="binding site" evidence="2">
    <location>
        <position position="10"/>
    </location>
    <ligand>
        <name>Zn(2+)</name>
        <dbReference type="ChEBI" id="CHEBI:29105"/>
    </ligand>
</feature>
<feature type="binding site" evidence="2">
    <location>
        <position position="13"/>
    </location>
    <ligand>
        <name>Zn(2+)</name>
        <dbReference type="ChEBI" id="CHEBI:29105"/>
    </ligand>
</feature>
<feature type="binding site" evidence="2">
    <location>
        <position position="32"/>
    </location>
    <ligand>
        <name>Zn(2+)</name>
        <dbReference type="ChEBI" id="CHEBI:29105"/>
    </ligand>
</feature>
<feature type="binding site" evidence="2">
    <location>
        <position position="35"/>
    </location>
    <ligand>
        <name>Zn(2+)</name>
        <dbReference type="ChEBI" id="CHEBI:29105"/>
    </ligand>
</feature>
<feature type="binding site" evidence="1">
    <location>
        <begin position="143"/>
        <end position="150"/>
    </location>
    <ligand>
        <name>ATP</name>
        <dbReference type="ChEBI" id="CHEBI:30616"/>
    </ligand>
</feature>
<organism>
    <name type="scientific">Synechococcus sp. (strain JA-3-3Ab)</name>
    <name type="common">Cyanobacteria bacterium Yellowstone A-Prime</name>
    <dbReference type="NCBI Taxonomy" id="321327"/>
    <lineage>
        <taxon>Bacteria</taxon>
        <taxon>Bacillati</taxon>
        <taxon>Cyanobacteriota</taxon>
        <taxon>Cyanophyceae</taxon>
        <taxon>Synechococcales</taxon>
        <taxon>Synechococcaceae</taxon>
        <taxon>Synechococcus</taxon>
    </lineage>
</organism>
<name>CLPX_SYNJA</name>
<keyword id="KW-0067">ATP-binding</keyword>
<keyword id="KW-0143">Chaperone</keyword>
<keyword id="KW-0479">Metal-binding</keyword>
<keyword id="KW-0547">Nucleotide-binding</keyword>
<keyword id="KW-0862">Zinc</keyword>
<comment type="function">
    <text evidence="1">ATP-dependent specificity component of the Clp protease. It directs the protease to specific substrates. Can perform chaperone functions in the absence of ClpP.</text>
</comment>
<comment type="subunit">
    <text evidence="1">Component of the ClpX-ClpP complex. Forms a hexameric ring that, in the presence of ATP, binds to fourteen ClpP subunits assembled into a disk-like structure with a central cavity, resembling the structure of eukaryotic proteasomes.</text>
</comment>
<comment type="similarity">
    <text evidence="1">Belongs to the ClpX chaperone family.</text>
</comment>
<protein>
    <recommendedName>
        <fullName evidence="1">ATP-dependent Clp protease ATP-binding subunit ClpX</fullName>
    </recommendedName>
</protein>
<evidence type="ECO:0000255" key="1">
    <source>
        <dbReference type="HAMAP-Rule" id="MF_00175"/>
    </source>
</evidence>
<evidence type="ECO:0000255" key="2">
    <source>
        <dbReference type="PROSITE-ProRule" id="PRU01250"/>
    </source>
</evidence>
<evidence type="ECO:0000256" key="3">
    <source>
        <dbReference type="SAM" id="MobiDB-lite"/>
    </source>
</evidence>